<name>CYSD_RHIE6</name>
<comment type="function">
    <text evidence="1">With CysN forms the ATP sulfurylase (ATPS) that catalyzes the adenylation of sulfate producing adenosine 5'-phosphosulfate (APS) and diphosphate, the first enzymatic step in sulfur assimilation pathway. APS synthesis involves the formation of a high-energy phosphoric-sulfuric acid anhydride bond driven by GTP hydrolysis by CysN coupled to ATP hydrolysis by CysD.</text>
</comment>
<comment type="catalytic activity">
    <reaction evidence="1">
        <text>sulfate + ATP + H(+) = adenosine 5'-phosphosulfate + diphosphate</text>
        <dbReference type="Rhea" id="RHEA:18133"/>
        <dbReference type="ChEBI" id="CHEBI:15378"/>
        <dbReference type="ChEBI" id="CHEBI:16189"/>
        <dbReference type="ChEBI" id="CHEBI:30616"/>
        <dbReference type="ChEBI" id="CHEBI:33019"/>
        <dbReference type="ChEBI" id="CHEBI:58243"/>
        <dbReference type="EC" id="2.7.7.4"/>
    </reaction>
</comment>
<comment type="pathway">
    <text evidence="1">Sulfur metabolism; hydrogen sulfide biosynthesis; sulfite from sulfate: step 1/3.</text>
</comment>
<comment type="subunit">
    <text evidence="1">Heterodimer composed of CysD, the smaller subunit, and CysN.</text>
</comment>
<comment type="similarity">
    <text evidence="1">Belongs to the PAPS reductase family. CysD subfamily.</text>
</comment>
<feature type="chain" id="PRO_1000092216" description="Sulfate adenylyltransferase subunit 2">
    <location>
        <begin position="1"/>
        <end position="317"/>
    </location>
</feature>
<feature type="region of interest" description="Disordered" evidence="2">
    <location>
        <begin position="1"/>
        <end position="21"/>
    </location>
</feature>
<feature type="region of interest" description="Disordered" evidence="2">
    <location>
        <begin position="298"/>
        <end position="317"/>
    </location>
</feature>
<dbReference type="EC" id="2.7.7.4" evidence="1"/>
<dbReference type="EMBL" id="CP001074">
    <property type="protein sequence ID" value="ACE90193.1"/>
    <property type="molecule type" value="Genomic_DNA"/>
</dbReference>
<dbReference type="SMR" id="B3PTD3"/>
<dbReference type="KEGG" id="rec:RHECIAT_CH0001212"/>
<dbReference type="eggNOG" id="COG0175">
    <property type="taxonomic scope" value="Bacteria"/>
</dbReference>
<dbReference type="HOGENOM" id="CLU_043026_0_0_5"/>
<dbReference type="UniPathway" id="UPA00140">
    <property type="reaction ID" value="UER00204"/>
</dbReference>
<dbReference type="Proteomes" id="UP000008817">
    <property type="component" value="Chromosome"/>
</dbReference>
<dbReference type="GO" id="GO:0005524">
    <property type="term" value="F:ATP binding"/>
    <property type="evidence" value="ECO:0007669"/>
    <property type="project" value="UniProtKB-KW"/>
</dbReference>
<dbReference type="GO" id="GO:0004781">
    <property type="term" value="F:sulfate adenylyltransferase (ATP) activity"/>
    <property type="evidence" value="ECO:0007669"/>
    <property type="project" value="UniProtKB-UniRule"/>
</dbReference>
<dbReference type="GO" id="GO:0070814">
    <property type="term" value="P:hydrogen sulfide biosynthetic process"/>
    <property type="evidence" value="ECO:0007669"/>
    <property type="project" value="UniProtKB-UniRule"/>
</dbReference>
<dbReference type="GO" id="GO:0000103">
    <property type="term" value="P:sulfate assimilation"/>
    <property type="evidence" value="ECO:0007669"/>
    <property type="project" value="UniProtKB-UniRule"/>
</dbReference>
<dbReference type="FunFam" id="3.40.50.620:FF:000002">
    <property type="entry name" value="Sulfate adenylyltransferase subunit 2"/>
    <property type="match status" value="1"/>
</dbReference>
<dbReference type="Gene3D" id="3.40.50.620">
    <property type="entry name" value="HUPs"/>
    <property type="match status" value="1"/>
</dbReference>
<dbReference type="HAMAP" id="MF_00064">
    <property type="entry name" value="Sulf_adenylyltr_sub2"/>
    <property type="match status" value="1"/>
</dbReference>
<dbReference type="InterPro" id="IPR002500">
    <property type="entry name" value="PAPS_reduct_dom"/>
</dbReference>
<dbReference type="InterPro" id="IPR014729">
    <property type="entry name" value="Rossmann-like_a/b/a_fold"/>
</dbReference>
<dbReference type="InterPro" id="IPR011784">
    <property type="entry name" value="SO4_adenylTrfase_ssu"/>
</dbReference>
<dbReference type="InterPro" id="IPR050128">
    <property type="entry name" value="Sulfate_adenylyltrnsfr_sub2"/>
</dbReference>
<dbReference type="NCBIfam" id="TIGR02039">
    <property type="entry name" value="CysD"/>
    <property type="match status" value="1"/>
</dbReference>
<dbReference type="NCBIfam" id="NF003587">
    <property type="entry name" value="PRK05253.1"/>
    <property type="match status" value="1"/>
</dbReference>
<dbReference type="NCBIfam" id="NF009214">
    <property type="entry name" value="PRK12563.1"/>
    <property type="match status" value="1"/>
</dbReference>
<dbReference type="PANTHER" id="PTHR43196">
    <property type="entry name" value="SULFATE ADENYLYLTRANSFERASE SUBUNIT 2"/>
    <property type="match status" value="1"/>
</dbReference>
<dbReference type="PANTHER" id="PTHR43196:SF1">
    <property type="entry name" value="SULFATE ADENYLYLTRANSFERASE SUBUNIT 2"/>
    <property type="match status" value="1"/>
</dbReference>
<dbReference type="Pfam" id="PF01507">
    <property type="entry name" value="PAPS_reduct"/>
    <property type="match status" value="1"/>
</dbReference>
<dbReference type="PIRSF" id="PIRSF002936">
    <property type="entry name" value="CysDAde_trans"/>
    <property type="match status" value="1"/>
</dbReference>
<dbReference type="SUPFAM" id="SSF52402">
    <property type="entry name" value="Adenine nucleotide alpha hydrolases-like"/>
    <property type="match status" value="1"/>
</dbReference>
<gene>
    <name evidence="1" type="primary">cysD</name>
    <name type="ordered locus">RHECIAT_CH0001212</name>
</gene>
<accession>B3PTD3</accession>
<evidence type="ECO:0000255" key="1">
    <source>
        <dbReference type="HAMAP-Rule" id="MF_00064"/>
    </source>
</evidence>
<evidence type="ECO:0000256" key="2">
    <source>
        <dbReference type="SAM" id="MobiDB-lite"/>
    </source>
</evidence>
<sequence length="317" mass="36470">MPDSRPDTELSNPQSAKAPLDPHLKALENESIHIFREVAAEFERPVMLYSIGKDSSVLLHLARKAFYPGRVPFPLLHVNTGWKFREMIAFRDETAKKYDLDLIEHINPRGAAENITPFTHGSAAFTDIMKTESLRQALDAGQFDAAFGGARRDEEASRAKERIYSFRTPDHRWDPRNQRPELWNVYNGMIRKGESVRAFPLSNWTEVDIWRYIQAEDIPLVPLYYAKMRKFVERDGMMILAEDPRLELLPGEVRQEGMIRFRTLGDFPLTGAIRSQATTLQEVIAELEIATVSERQGRAIDRDQSGSMEKKKREGYF</sequence>
<reference key="1">
    <citation type="journal article" date="2010" name="Appl. Environ. Microbiol.">
        <title>Conserved symbiotic plasmid DNA sequences in the multireplicon pangenomic structure of Rhizobium etli.</title>
        <authorList>
            <person name="Gonzalez V."/>
            <person name="Acosta J.L."/>
            <person name="Santamaria R.I."/>
            <person name="Bustos P."/>
            <person name="Fernandez J.L."/>
            <person name="Hernandez Gonzalez I.L."/>
            <person name="Diaz R."/>
            <person name="Flores M."/>
            <person name="Palacios R."/>
            <person name="Mora J."/>
            <person name="Davila G."/>
        </authorList>
    </citation>
    <scope>NUCLEOTIDE SEQUENCE [LARGE SCALE GENOMIC DNA]</scope>
    <source>
        <strain>CIAT 652</strain>
    </source>
</reference>
<protein>
    <recommendedName>
        <fullName evidence="1">Sulfate adenylyltransferase subunit 2</fullName>
        <ecNumber evidence="1">2.7.7.4</ecNumber>
    </recommendedName>
    <alternativeName>
        <fullName evidence="1">ATP-sulfurylase small subunit</fullName>
    </alternativeName>
    <alternativeName>
        <fullName evidence="1">Sulfate adenylate transferase</fullName>
        <shortName evidence="1">SAT</shortName>
    </alternativeName>
</protein>
<organism>
    <name type="scientific">Rhizobium etli (strain CIAT 652)</name>
    <dbReference type="NCBI Taxonomy" id="491916"/>
    <lineage>
        <taxon>Bacteria</taxon>
        <taxon>Pseudomonadati</taxon>
        <taxon>Pseudomonadota</taxon>
        <taxon>Alphaproteobacteria</taxon>
        <taxon>Hyphomicrobiales</taxon>
        <taxon>Rhizobiaceae</taxon>
        <taxon>Rhizobium/Agrobacterium group</taxon>
        <taxon>Rhizobium</taxon>
    </lineage>
</organism>
<keyword id="KW-0067">ATP-binding</keyword>
<keyword id="KW-0547">Nucleotide-binding</keyword>
<keyword id="KW-0548">Nucleotidyltransferase</keyword>
<keyword id="KW-0808">Transferase</keyword>
<proteinExistence type="inferred from homology"/>